<name>KPRP_MOUSE</name>
<evidence type="ECO:0000250" key="1">
    <source>
        <dbReference type="UniProtKB" id="Q5T749"/>
    </source>
</evidence>
<evidence type="ECO:0000250" key="2">
    <source>
        <dbReference type="UniProtKB" id="Q7TQM5"/>
    </source>
</evidence>
<evidence type="ECO:0000256" key="3">
    <source>
        <dbReference type="SAM" id="MobiDB-lite"/>
    </source>
</evidence>
<evidence type="ECO:0000305" key="4"/>
<evidence type="ECO:0000312" key="5">
    <source>
        <dbReference type="EMBL" id="AAI41373.1"/>
    </source>
</evidence>
<evidence type="ECO:0000312" key="6">
    <source>
        <dbReference type="EMBL" id="BAB22669.1"/>
    </source>
</evidence>
<evidence type="ECO:0000312" key="7">
    <source>
        <dbReference type="EMBL" id="EDL00676.1"/>
    </source>
</evidence>
<evidence type="ECO:0000312" key="8">
    <source>
        <dbReference type="MGI" id="MGI:1920981"/>
    </source>
</evidence>
<organism>
    <name type="scientific">Mus musculus</name>
    <name type="common">Mouse</name>
    <dbReference type="NCBI Taxonomy" id="10090"/>
    <lineage>
        <taxon>Eukaryota</taxon>
        <taxon>Metazoa</taxon>
        <taxon>Chordata</taxon>
        <taxon>Craniata</taxon>
        <taxon>Vertebrata</taxon>
        <taxon>Euteleostomi</taxon>
        <taxon>Mammalia</taxon>
        <taxon>Eutheria</taxon>
        <taxon>Euarchontoglires</taxon>
        <taxon>Glires</taxon>
        <taxon>Rodentia</taxon>
        <taxon>Myomorpha</taxon>
        <taxon>Muroidea</taxon>
        <taxon>Muridae</taxon>
        <taxon>Murinae</taxon>
        <taxon>Mus</taxon>
        <taxon>Mus</taxon>
    </lineage>
</organism>
<reference evidence="7" key="1">
    <citation type="submission" date="2005-07" db="EMBL/GenBank/DDBJ databases">
        <authorList>
            <person name="Mural R.J."/>
            <person name="Adams M.D."/>
            <person name="Myers E.W."/>
            <person name="Smith H.O."/>
            <person name="Venter J.C."/>
        </authorList>
    </citation>
    <scope>NUCLEOTIDE SEQUENCE [LARGE SCALE GENOMIC DNA]</scope>
</reference>
<reference evidence="5" key="2">
    <citation type="journal article" date="2004" name="Genome Res.">
        <title>The status, quality, and expansion of the NIH full-length cDNA project: the Mammalian Gene Collection (MGC).</title>
        <authorList>
            <consortium name="The MGC Project Team"/>
        </authorList>
    </citation>
    <scope>NUCLEOTIDE SEQUENCE [LARGE SCALE MRNA]</scope>
</reference>
<reference evidence="4 6" key="3">
    <citation type="journal article" date="2005" name="Science">
        <title>The transcriptional landscape of the mammalian genome.</title>
        <authorList>
            <person name="Carninci P."/>
            <person name="Kasukawa T."/>
            <person name="Katayama S."/>
            <person name="Gough J."/>
            <person name="Frith M.C."/>
            <person name="Maeda N."/>
            <person name="Oyama R."/>
            <person name="Ravasi T."/>
            <person name="Lenhard B."/>
            <person name="Wells C."/>
            <person name="Kodzius R."/>
            <person name="Shimokawa K."/>
            <person name="Bajic V.B."/>
            <person name="Brenner S.E."/>
            <person name="Batalov S."/>
            <person name="Forrest A.R."/>
            <person name="Zavolan M."/>
            <person name="Davis M.J."/>
            <person name="Wilming L.G."/>
            <person name="Aidinis V."/>
            <person name="Allen J.E."/>
            <person name="Ambesi-Impiombato A."/>
            <person name="Apweiler R."/>
            <person name="Aturaliya R.N."/>
            <person name="Bailey T.L."/>
            <person name="Bansal M."/>
            <person name="Baxter L."/>
            <person name="Beisel K.W."/>
            <person name="Bersano T."/>
            <person name="Bono H."/>
            <person name="Chalk A.M."/>
            <person name="Chiu K.P."/>
            <person name="Choudhary V."/>
            <person name="Christoffels A."/>
            <person name="Clutterbuck D.R."/>
            <person name="Crowe M.L."/>
            <person name="Dalla E."/>
            <person name="Dalrymple B.P."/>
            <person name="de Bono B."/>
            <person name="Della Gatta G."/>
            <person name="di Bernardo D."/>
            <person name="Down T."/>
            <person name="Engstrom P."/>
            <person name="Fagiolini M."/>
            <person name="Faulkner G."/>
            <person name="Fletcher C.F."/>
            <person name="Fukushima T."/>
            <person name="Furuno M."/>
            <person name="Futaki S."/>
            <person name="Gariboldi M."/>
            <person name="Georgii-Hemming P."/>
            <person name="Gingeras T.R."/>
            <person name="Gojobori T."/>
            <person name="Green R.E."/>
            <person name="Gustincich S."/>
            <person name="Harbers M."/>
            <person name="Hayashi Y."/>
            <person name="Hensch T.K."/>
            <person name="Hirokawa N."/>
            <person name="Hill D."/>
            <person name="Huminiecki L."/>
            <person name="Iacono M."/>
            <person name="Ikeo K."/>
            <person name="Iwama A."/>
            <person name="Ishikawa T."/>
            <person name="Jakt M."/>
            <person name="Kanapin A."/>
            <person name="Katoh M."/>
            <person name="Kawasawa Y."/>
            <person name="Kelso J."/>
            <person name="Kitamura H."/>
            <person name="Kitano H."/>
            <person name="Kollias G."/>
            <person name="Krishnan S.P."/>
            <person name="Kruger A."/>
            <person name="Kummerfeld S.K."/>
            <person name="Kurochkin I.V."/>
            <person name="Lareau L.F."/>
            <person name="Lazarevic D."/>
            <person name="Lipovich L."/>
            <person name="Liu J."/>
            <person name="Liuni S."/>
            <person name="McWilliam S."/>
            <person name="Madan Babu M."/>
            <person name="Madera M."/>
            <person name="Marchionni L."/>
            <person name="Matsuda H."/>
            <person name="Matsuzawa S."/>
            <person name="Miki H."/>
            <person name="Mignone F."/>
            <person name="Miyake S."/>
            <person name="Morris K."/>
            <person name="Mottagui-Tabar S."/>
            <person name="Mulder N."/>
            <person name="Nakano N."/>
            <person name="Nakauchi H."/>
            <person name="Ng P."/>
            <person name="Nilsson R."/>
            <person name="Nishiguchi S."/>
            <person name="Nishikawa S."/>
            <person name="Nori F."/>
            <person name="Ohara O."/>
            <person name="Okazaki Y."/>
            <person name="Orlando V."/>
            <person name="Pang K.C."/>
            <person name="Pavan W.J."/>
            <person name="Pavesi G."/>
            <person name="Pesole G."/>
            <person name="Petrovsky N."/>
            <person name="Piazza S."/>
            <person name="Reed J."/>
            <person name="Reid J.F."/>
            <person name="Ring B.Z."/>
            <person name="Ringwald M."/>
            <person name="Rost B."/>
            <person name="Ruan Y."/>
            <person name="Salzberg S.L."/>
            <person name="Sandelin A."/>
            <person name="Schneider C."/>
            <person name="Schoenbach C."/>
            <person name="Sekiguchi K."/>
            <person name="Semple C.A."/>
            <person name="Seno S."/>
            <person name="Sessa L."/>
            <person name="Sheng Y."/>
            <person name="Shibata Y."/>
            <person name="Shimada H."/>
            <person name="Shimada K."/>
            <person name="Silva D."/>
            <person name="Sinclair B."/>
            <person name="Sperling S."/>
            <person name="Stupka E."/>
            <person name="Sugiura K."/>
            <person name="Sultana R."/>
            <person name="Takenaka Y."/>
            <person name="Taki K."/>
            <person name="Tammoja K."/>
            <person name="Tan S.L."/>
            <person name="Tang S."/>
            <person name="Taylor M.S."/>
            <person name="Tegner J."/>
            <person name="Teichmann S.A."/>
            <person name="Ueda H.R."/>
            <person name="van Nimwegen E."/>
            <person name="Verardo R."/>
            <person name="Wei C.L."/>
            <person name="Yagi K."/>
            <person name="Yamanishi H."/>
            <person name="Zabarovsky E."/>
            <person name="Zhu S."/>
            <person name="Zimmer A."/>
            <person name="Hide W."/>
            <person name="Bult C."/>
            <person name="Grimmond S.M."/>
            <person name="Teasdale R.D."/>
            <person name="Liu E.T."/>
            <person name="Brusic V."/>
            <person name="Quackenbush J."/>
            <person name="Wahlestedt C."/>
            <person name="Mattick J.S."/>
            <person name="Hume D.A."/>
            <person name="Kai C."/>
            <person name="Sasaki D."/>
            <person name="Tomaru Y."/>
            <person name="Fukuda S."/>
            <person name="Kanamori-Katayama M."/>
            <person name="Suzuki M."/>
            <person name="Aoki J."/>
            <person name="Arakawa T."/>
            <person name="Iida J."/>
            <person name="Imamura K."/>
            <person name="Itoh M."/>
            <person name="Kato T."/>
            <person name="Kawaji H."/>
            <person name="Kawagashira N."/>
            <person name="Kawashima T."/>
            <person name="Kojima M."/>
            <person name="Kondo S."/>
            <person name="Konno H."/>
            <person name="Nakano K."/>
            <person name="Ninomiya N."/>
            <person name="Nishio T."/>
            <person name="Okada M."/>
            <person name="Plessy C."/>
            <person name="Shibata K."/>
            <person name="Shiraki T."/>
            <person name="Suzuki S."/>
            <person name="Tagami M."/>
            <person name="Waki K."/>
            <person name="Watahiki A."/>
            <person name="Okamura-Oho Y."/>
            <person name="Suzuki H."/>
            <person name="Kawai J."/>
            <person name="Hayashizaki Y."/>
        </authorList>
    </citation>
    <scope>NUCLEOTIDE SEQUENCE [LARGE SCALE MRNA] OF 551-657</scope>
    <source>
        <strain evidence="6">C57BL/6J</strain>
        <tissue evidence="6">Embryo</tissue>
    </source>
</reference>
<protein>
    <recommendedName>
        <fullName evidence="5">Keratinocyte proline-rich protein</fullName>
    </recommendedName>
</protein>
<keyword id="KW-0963">Cytoplasm</keyword>
<keyword id="KW-0597">Phosphoprotein</keyword>
<keyword id="KW-1185">Reference proteome</keyword>
<gene>
    <name evidence="5 8" type="primary">Kprp</name>
</gene>
<accession>B2RUR4</accession>
<accession>Q9D1P8</accession>
<comment type="subcellular location">
    <subcellularLocation>
        <location evidence="2">Cytoplasm</location>
    </subcellularLocation>
</comment>
<comment type="sequence caution" evidence="4">
    <conflict type="erroneous initiation">
        <sequence resource="EMBL-CDS" id="BAB22669"/>
    </conflict>
</comment>
<feature type="chain" id="PRO_0000364006" description="Keratinocyte proline-rich protein">
    <location>
        <begin position="1"/>
        <end position="657"/>
    </location>
</feature>
<feature type="region of interest" description="Disordered" evidence="3">
    <location>
        <begin position="285"/>
        <end position="320"/>
    </location>
</feature>
<feature type="region of interest" description="Disordered" evidence="3">
    <location>
        <begin position="425"/>
        <end position="493"/>
    </location>
</feature>
<feature type="region of interest" description="Disordered" evidence="3">
    <location>
        <begin position="517"/>
        <end position="568"/>
    </location>
</feature>
<feature type="compositionally biased region" description="Low complexity" evidence="3">
    <location>
        <begin position="292"/>
        <end position="302"/>
    </location>
</feature>
<feature type="compositionally biased region" description="Basic and acidic residues" evidence="3">
    <location>
        <begin position="434"/>
        <end position="444"/>
    </location>
</feature>
<feature type="compositionally biased region" description="Pro residues" evidence="3">
    <location>
        <begin position="449"/>
        <end position="493"/>
    </location>
</feature>
<feature type="compositionally biased region" description="Pro residues" evidence="3">
    <location>
        <begin position="517"/>
        <end position="530"/>
    </location>
</feature>
<feature type="compositionally biased region" description="Pro residues" evidence="3">
    <location>
        <begin position="539"/>
        <end position="561"/>
    </location>
</feature>
<feature type="modified residue" description="Phosphoserine" evidence="1">
    <location>
        <position position="442"/>
    </location>
</feature>
<dbReference type="EMBL" id="CH466656">
    <property type="protein sequence ID" value="EDL00676.1"/>
    <property type="molecule type" value="Genomic_DNA"/>
</dbReference>
<dbReference type="EMBL" id="BC141372">
    <property type="protein sequence ID" value="AAI41373.1"/>
    <property type="molecule type" value="mRNA"/>
</dbReference>
<dbReference type="EMBL" id="AK003253">
    <property type="protein sequence ID" value="BAB22669.1"/>
    <property type="status" value="ALT_INIT"/>
    <property type="molecule type" value="mRNA"/>
</dbReference>
<dbReference type="CCDS" id="CCDS38517.1"/>
<dbReference type="RefSeq" id="NP_082905.1">
    <property type="nucleotide sequence ID" value="NM_028629.1"/>
</dbReference>
<dbReference type="BioGRID" id="241339">
    <property type="interactions" value="2"/>
</dbReference>
<dbReference type="FunCoup" id="B2RUR4">
    <property type="interactions" value="8"/>
</dbReference>
<dbReference type="STRING" id="10090.ENSMUSP00000072200"/>
<dbReference type="iPTMnet" id="B2RUR4"/>
<dbReference type="PhosphoSitePlus" id="B2RUR4"/>
<dbReference type="PaxDb" id="10090-ENSMUSP00000072200"/>
<dbReference type="ProteomicsDB" id="263451"/>
<dbReference type="Antibodypedia" id="50318">
    <property type="antibodies" value="29 antibodies from 10 providers"/>
</dbReference>
<dbReference type="Ensembl" id="ENSMUST00000072363.5">
    <property type="protein sequence ID" value="ENSMUSP00000072200.5"/>
    <property type="gene ID" value="ENSMUSG00000059832.5"/>
</dbReference>
<dbReference type="GeneID" id="433619"/>
<dbReference type="KEGG" id="mmu:433619"/>
<dbReference type="UCSC" id="uc008qes.1">
    <property type="organism name" value="mouse"/>
</dbReference>
<dbReference type="AGR" id="MGI:1920981"/>
<dbReference type="CTD" id="448834"/>
<dbReference type="MGI" id="MGI:1920981">
    <property type="gene designation" value="Kprp"/>
</dbReference>
<dbReference type="VEuPathDB" id="HostDB:ENSMUSG00000059832"/>
<dbReference type="eggNOG" id="ENOG502S65C">
    <property type="taxonomic scope" value="Eukaryota"/>
</dbReference>
<dbReference type="GeneTree" id="ENSGT00730000111554"/>
<dbReference type="HOGENOM" id="CLU_024690_0_0_1"/>
<dbReference type="InParanoid" id="B2RUR4"/>
<dbReference type="OMA" id="QAPCQSK"/>
<dbReference type="OrthoDB" id="9451806at2759"/>
<dbReference type="PhylomeDB" id="B2RUR4"/>
<dbReference type="TreeFam" id="TF351578"/>
<dbReference type="BioGRID-ORCS" id="433619">
    <property type="hits" value="3 hits in 77 CRISPR screens"/>
</dbReference>
<dbReference type="PRO" id="PR:B2RUR4"/>
<dbReference type="Proteomes" id="UP000000589">
    <property type="component" value="Chromosome 3"/>
</dbReference>
<dbReference type="RNAct" id="B2RUR4">
    <property type="molecule type" value="protein"/>
</dbReference>
<dbReference type="Bgee" id="ENSMUSG00000059832">
    <property type="expression patterns" value="Expressed in tail skin and 39 other cell types or tissues"/>
</dbReference>
<dbReference type="GO" id="GO:0005737">
    <property type="term" value="C:cytoplasm"/>
    <property type="evidence" value="ECO:0007669"/>
    <property type="project" value="UniProtKB-SubCell"/>
</dbReference>
<dbReference type="GO" id="GO:0002934">
    <property type="term" value="P:desmosome organization"/>
    <property type="evidence" value="ECO:0000315"/>
    <property type="project" value="MGI"/>
</dbReference>
<dbReference type="GO" id="GO:0008544">
    <property type="term" value="P:epidermis development"/>
    <property type="evidence" value="ECO:0000315"/>
    <property type="project" value="MGI"/>
</dbReference>
<dbReference type="GO" id="GO:0061436">
    <property type="term" value="P:establishment of skin barrier"/>
    <property type="evidence" value="ECO:0000315"/>
    <property type="project" value="MGI"/>
</dbReference>
<dbReference type="GO" id="GO:0006954">
    <property type="term" value="P:inflammatory response"/>
    <property type="evidence" value="ECO:0000315"/>
    <property type="project" value="MGI"/>
</dbReference>
<dbReference type="GO" id="GO:0043588">
    <property type="term" value="P:skin development"/>
    <property type="evidence" value="ECO:0000315"/>
    <property type="project" value="MGI"/>
</dbReference>
<dbReference type="InterPro" id="IPR052881">
    <property type="entry name" value="Keratinocyte_PR"/>
</dbReference>
<dbReference type="PANTHER" id="PTHR48138:SF2">
    <property type="entry name" value="KERATINOCYTE PROLINE-RICH PROTEIN"/>
    <property type="match status" value="1"/>
</dbReference>
<dbReference type="PANTHER" id="PTHR48138">
    <property type="entry name" value="KERATINOCYTE PROLINE-RICH PROTEIN-RELATED"/>
    <property type="match status" value="1"/>
</dbReference>
<sequence length="657" mass="71740">MCDQQPIQCCVPIPQCCVKGSSFGPSQFSYANNQVLVEAPCEMKVLECAAPCPVQVSQTACQSSTTEVKGQAPCKTTKGKCQAPCQSKTTQVKYQPKTTEIKCQAPCQTQVSCVQCQAPCQSQVSYVQIPQPPQTYYVECPPVYYTETRYVEYPVSTYMPAPALQPGYTYVECPAVGQGQGQGQGGFSTQYQYQGSYGSCTPQSQSRRSYSSCGPQNQSQASYSYCEPQFQSGPSYTNCGPQRQSQASYGNCTSQLQSRASYSNCSSQRRSGATFSTCAPRCQSQGTYGSYTSQRRSQSTSRCLPPRRLQPSYRSCSPPRHSEPCYSSCLPSRCSSGSYNYCTPPRRSEPIYGSHCPPRGRPSGCSQRCGPKCRVEISSPCCPRQVPPQRCPVQIPPFRGRSQSCPRQPSWGVSCPDLRPRADPHPFPRSCRPQHLDRSPESSRQRCPVPAPRPYPRPQPCPSPEPRPYPRPQPCPSPEPRPRPCPQPCPSPEPRPCPPLRRFSEPCLYPEPCSAPQPVPHPAPRPVPRPRPVHCENPGPRPQPCPLPHPEPMPRPAPCSSPEPCGQPVRCPSPCSGPNPVPYRQELGCHESNPCRLDTEGPRCGSYNFTQRQESNGSCESGDVFSGSHGLSGCGDQGNTCGGMNCGAYGGAKGAYF</sequence>
<proteinExistence type="evidence at transcript level"/>